<evidence type="ECO:0000255" key="1">
    <source>
        <dbReference type="HAMAP-Rule" id="MF_00392"/>
    </source>
</evidence>
<accession>Q325V8</accession>
<proteinExistence type="inferred from homology"/>
<protein>
    <recommendedName>
        <fullName evidence="1">Lipid-A-disaccharide synthase</fullName>
        <ecNumber evidence="1">2.4.1.182</ecNumber>
    </recommendedName>
</protein>
<feature type="chain" id="PRO_0000255223" description="Lipid-A-disaccharide synthase">
    <location>
        <begin position="1"/>
        <end position="382"/>
    </location>
</feature>
<reference key="1">
    <citation type="journal article" date="2005" name="Nucleic Acids Res.">
        <title>Genome dynamics and diversity of Shigella species, the etiologic agents of bacillary dysentery.</title>
        <authorList>
            <person name="Yang F."/>
            <person name="Yang J."/>
            <person name="Zhang X."/>
            <person name="Chen L."/>
            <person name="Jiang Y."/>
            <person name="Yan Y."/>
            <person name="Tang X."/>
            <person name="Wang J."/>
            <person name="Xiong Z."/>
            <person name="Dong J."/>
            <person name="Xue Y."/>
            <person name="Zhu Y."/>
            <person name="Xu X."/>
            <person name="Sun L."/>
            <person name="Chen S."/>
            <person name="Nie H."/>
            <person name="Peng J."/>
            <person name="Xu J."/>
            <person name="Wang Y."/>
            <person name="Yuan Z."/>
            <person name="Wen Y."/>
            <person name="Yao Z."/>
            <person name="Shen Y."/>
            <person name="Qiang B."/>
            <person name="Hou Y."/>
            <person name="Yu J."/>
            <person name="Jin Q."/>
        </authorList>
    </citation>
    <scope>NUCLEOTIDE SEQUENCE [LARGE SCALE GENOMIC DNA]</scope>
    <source>
        <strain>Sb227</strain>
    </source>
</reference>
<keyword id="KW-0328">Glycosyltransferase</keyword>
<keyword id="KW-0441">Lipid A biosynthesis</keyword>
<keyword id="KW-0444">Lipid biosynthesis</keyword>
<keyword id="KW-0443">Lipid metabolism</keyword>
<keyword id="KW-0808">Transferase</keyword>
<organism>
    <name type="scientific">Shigella boydii serotype 4 (strain Sb227)</name>
    <dbReference type="NCBI Taxonomy" id="300268"/>
    <lineage>
        <taxon>Bacteria</taxon>
        <taxon>Pseudomonadati</taxon>
        <taxon>Pseudomonadota</taxon>
        <taxon>Gammaproteobacteria</taxon>
        <taxon>Enterobacterales</taxon>
        <taxon>Enterobacteriaceae</taxon>
        <taxon>Shigella</taxon>
    </lineage>
</organism>
<gene>
    <name evidence="1" type="primary">lpxB</name>
    <name type="ordered locus">SBO_0170</name>
</gene>
<name>LPXB_SHIBS</name>
<sequence length="382" mass="42448">MTEQRPLTIALVAGETSGDILGAGLIRALKERVPNARFVGVAGPRMQAEGCEAWYEMEELAVMGIVEVLGRLRRLLHIRADLTKRFGELKPDVFVGIDAPDFNITLEGNLKKQGIKTIHYVSPSVWAWRQKRVFKIGRATDLVLAFLPFEKAFYDKYNVPCRFIGHTMADAMPLDPDKNAARDVLGIPHDAHCLALLPGSRGAEVEMLSADFLKTAQLLRQTYPDLEIVVPLVNAKRREQFERIKAEVAPDFSVHLLDGMGREAMVASDAALLASGTAALECMLAKCPMVVGYRMKPFTFWLAKRLVKTDYVSLPNLLAGRELVKELLQEECEPQKLAAALLPLLANGKISHAMHDTFRELHQQIRCNADEQAAQAVLELAQ</sequence>
<dbReference type="EC" id="2.4.1.182" evidence="1"/>
<dbReference type="EMBL" id="CP000036">
    <property type="protein sequence ID" value="ABB64900.1"/>
    <property type="molecule type" value="Genomic_DNA"/>
</dbReference>
<dbReference type="RefSeq" id="WP_000139665.1">
    <property type="nucleotide sequence ID" value="NC_007613.1"/>
</dbReference>
<dbReference type="SMR" id="Q325V8"/>
<dbReference type="CAZy" id="GT19">
    <property type="family name" value="Glycosyltransferase Family 19"/>
</dbReference>
<dbReference type="KEGG" id="sbo:SBO_0170"/>
<dbReference type="HOGENOM" id="CLU_036577_3_0_6"/>
<dbReference type="UniPathway" id="UPA00359">
    <property type="reaction ID" value="UER00481"/>
</dbReference>
<dbReference type="Proteomes" id="UP000007067">
    <property type="component" value="Chromosome"/>
</dbReference>
<dbReference type="GO" id="GO:0016020">
    <property type="term" value="C:membrane"/>
    <property type="evidence" value="ECO:0007669"/>
    <property type="project" value="GOC"/>
</dbReference>
<dbReference type="GO" id="GO:0008915">
    <property type="term" value="F:lipid-A-disaccharide synthase activity"/>
    <property type="evidence" value="ECO:0007669"/>
    <property type="project" value="UniProtKB-UniRule"/>
</dbReference>
<dbReference type="GO" id="GO:0005543">
    <property type="term" value="F:phospholipid binding"/>
    <property type="evidence" value="ECO:0007669"/>
    <property type="project" value="TreeGrafter"/>
</dbReference>
<dbReference type="GO" id="GO:0009245">
    <property type="term" value="P:lipid A biosynthetic process"/>
    <property type="evidence" value="ECO:0007669"/>
    <property type="project" value="UniProtKB-UniRule"/>
</dbReference>
<dbReference type="CDD" id="cd01635">
    <property type="entry name" value="Glycosyltransferase_GTB-type"/>
    <property type="match status" value="1"/>
</dbReference>
<dbReference type="HAMAP" id="MF_00392">
    <property type="entry name" value="LpxB"/>
    <property type="match status" value="1"/>
</dbReference>
<dbReference type="InterPro" id="IPR003835">
    <property type="entry name" value="Glyco_trans_19"/>
</dbReference>
<dbReference type="NCBIfam" id="TIGR00215">
    <property type="entry name" value="lpxB"/>
    <property type="match status" value="1"/>
</dbReference>
<dbReference type="PANTHER" id="PTHR30372">
    <property type="entry name" value="LIPID-A-DISACCHARIDE SYNTHASE"/>
    <property type="match status" value="1"/>
</dbReference>
<dbReference type="PANTHER" id="PTHR30372:SF4">
    <property type="entry name" value="LIPID-A-DISACCHARIDE SYNTHASE, MITOCHONDRIAL-RELATED"/>
    <property type="match status" value="1"/>
</dbReference>
<dbReference type="Pfam" id="PF02684">
    <property type="entry name" value="LpxB"/>
    <property type="match status" value="1"/>
</dbReference>
<dbReference type="SUPFAM" id="SSF53756">
    <property type="entry name" value="UDP-Glycosyltransferase/glycogen phosphorylase"/>
    <property type="match status" value="1"/>
</dbReference>
<comment type="function">
    <text evidence="1">Condensation of UDP-2,3-diacylglucosamine and 2,3-diacylglucosamine-1-phosphate to form lipid A disaccharide, a precursor of lipid A, a phosphorylated glycolipid that anchors the lipopolysaccharide to the outer membrane of the cell.</text>
</comment>
<comment type="catalytic activity">
    <reaction evidence="1">
        <text>2-N,3-O-bis[(3R)-3-hydroxytetradecanoyl]-alpha-D-glucosaminyl 1-phosphate + UDP-2-N,3-O-bis[(3R)-3-hydroxytetradecanoyl]-alpha-D-glucosamine = lipid A disaccharide (E. coli) + UDP + H(+)</text>
        <dbReference type="Rhea" id="RHEA:22668"/>
        <dbReference type="ChEBI" id="CHEBI:15378"/>
        <dbReference type="ChEBI" id="CHEBI:57957"/>
        <dbReference type="ChEBI" id="CHEBI:58223"/>
        <dbReference type="ChEBI" id="CHEBI:58466"/>
        <dbReference type="ChEBI" id="CHEBI:78847"/>
    </reaction>
</comment>
<comment type="catalytic activity">
    <reaction evidence="1">
        <text>a lipid X + a UDP-2-N,3-O-bis[(3R)-3-hydroxyacyl]-alpha-D-glucosamine = a lipid A disaccharide + UDP + H(+)</text>
        <dbReference type="Rhea" id="RHEA:67828"/>
        <dbReference type="ChEBI" id="CHEBI:15378"/>
        <dbReference type="ChEBI" id="CHEBI:58223"/>
        <dbReference type="ChEBI" id="CHEBI:137748"/>
        <dbReference type="ChEBI" id="CHEBI:176338"/>
        <dbReference type="ChEBI" id="CHEBI:176343"/>
        <dbReference type="EC" id="2.4.1.182"/>
    </reaction>
</comment>
<comment type="pathway">
    <text evidence="1">Glycolipid biosynthesis; lipid IV(A) biosynthesis; lipid IV(A) from (3R)-3-hydroxytetradecanoyl-[acyl-carrier-protein] and UDP-N-acetyl-alpha-D-glucosamine: step 5/6.</text>
</comment>
<comment type="similarity">
    <text evidence="1">Belongs to the LpxB family.</text>
</comment>